<organism>
    <name type="scientific">Prochlorococcus marinus (strain NATL1A)</name>
    <dbReference type="NCBI Taxonomy" id="167555"/>
    <lineage>
        <taxon>Bacteria</taxon>
        <taxon>Bacillati</taxon>
        <taxon>Cyanobacteriota</taxon>
        <taxon>Cyanophyceae</taxon>
        <taxon>Synechococcales</taxon>
        <taxon>Prochlorococcaceae</taxon>
        <taxon>Prochlorococcus</taxon>
    </lineage>
</organism>
<dbReference type="EMBL" id="CP000553">
    <property type="protein sequence ID" value="ABM76159.1"/>
    <property type="molecule type" value="Genomic_DNA"/>
</dbReference>
<dbReference type="RefSeq" id="WP_011294850.1">
    <property type="nucleotide sequence ID" value="NC_008819.1"/>
</dbReference>
<dbReference type="SMR" id="A2C3U9"/>
<dbReference type="KEGG" id="pme:NATL1_16021"/>
<dbReference type="HOGENOM" id="CLU_216743_1_0_3"/>
<dbReference type="Proteomes" id="UP000002592">
    <property type="component" value="Chromosome"/>
</dbReference>
<dbReference type="GO" id="GO:0009512">
    <property type="term" value="C:cytochrome b6f complex"/>
    <property type="evidence" value="ECO:0007669"/>
    <property type="project" value="InterPro"/>
</dbReference>
<dbReference type="GO" id="GO:0031676">
    <property type="term" value="C:plasma membrane-derived thylakoid membrane"/>
    <property type="evidence" value="ECO:0007669"/>
    <property type="project" value="UniProtKB-SubCell"/>
</dbReference>
<dbReference type="GO" id="GO:0009055">
    <property type="term" value="F:electron transfer activity"/>
    <property type="evidence" value="ECO:0007669"/>
    <property type="project" value="UniProtKB-UniRule"/>
</dbReference>
<dbReference type="GO" id="GO:0015979">
    <property type="term" value="P:photosynthesis"/>
    <property type="evidence" value="ECO:0007669"/>
    <property type="project" value="UniProtKB-KW"/>
</dbReference>
<dbReference type="HAMAP" id="MF_00396">
    <property type="entry name" value="Cytb6_f_PetM"/>
    <property type="match status" value="1"/>
</dbReference>
<dbReference type="InterPro" id="IPR012595">
    <property type="entry name" value="PetM_cyt_b6/f_cplx_su7"/>
</dbReference>
<dbReference type="NCBIfam" id="NF008826">
    <property type="entry name" value="PRK11876.1-2"/>
    <property type="match status" value="1"/>
</dbReference>
<dbReference type="Pfam" id="PF08041">
    <property type="entry name" value="PetM"/>
    <property type="match status" value="1"/>
</dbReference>
<proteinExistence type="inferred from homology"/>
<accession>A2C3U9</accession>
<name>PETM_PROM1</name>
<keyword id="KW-0249">Electron transport</keyword>
<keyword id="KW-0472">Membrane</keyword>
<keyword id="KW-0602">Photosynthesis</keyword>
<keyword id="KW-0793">Thylakoid</keyword>
<keyword id="KW-0812">Transmembrane</keyword>
<keyword id="KW-1133">Transmembrane helix</keyword>
<keyword id="KW-0813">Transport</keyword>
<sequence>MASEIFGIAAVFWVLIPVGLLGGVLLLKLQGD</sequence>
<protein>
    <recommendedName>
        <fullName evidence="1">Cytochrome b6-f complex subunit 7</fullName>
    </recommendedName>
    <alternativeName>
        <fullName evidence="1">Cytochrome b6-f complex subunit PetM</fullName>
    </alternativeName>
    <alternativeName>
        <fullName evidence="1">Cytochrome b6-f complex subunit VII</fullName>
    </alternativeName>
</protein>
<feature type="chain" id="PRO_1000049585" description="Cytochrome b6-f complex subunit 7">
    <location>
        <begin position="1"/>
        <end position="32"/>
    </location>
</feature>
<feature type="transmembrane region" description="Helical" evidence="1">
    <location>
        <begin position="9"/>
        <end position="27"/>
    </location>
</feature>
<reference key="1">
    <citation type="journal article" date="2007" name="PLoS Genet.">
        <title>Patterns and implications of gene gain and loss in the evolution of Prochlorococcus.</title>
        <authorList>
            <person name="Kettler G.C."/>
            <person name="Martiny A.C."/>
            <person name="Huang K."/>
            <person name="Zucker J."/>
            <person name="Coleman M.L."/>
            <person name="Rodrigue S."/>
            <person name="Chen F."/>
            <person name="Lapidus A."/>
            <person name="Ferriera S."/>
            <person name="Johnson J."/>
            <person name="Steglich C."/>
            <person name="Church G.M."/>
            <person name="Richardson P."/>
            <person name="Chisholm S.W."/>
        </authorList>
    </citation>
    <scope>NUCLEOTIDE SEQUENCE [LARGE SCALE GENOMIC DNA]</scope>
    <source>
        <strain>NATL1A</strain>
    </source>
</reference>
<gene>
    <name evidence="1" type="primary">petM</name>
    <name type="ordered locus">NATL1_16021</name>
</gene>
<comment type="function">
    <text evidence="1">Component of the cytochrome b6-f complex, which mediates electron transfer between photosystem II (PSII) and photosystem I (PSI), cyclic electron flow around PSI, and state transitions.</text>
</comment>
<comment type="subunit">
    <text evidence="1">The 4 large subunits of the cytochrome b6-f complex are cytochrome b6, subunit IV (17 kDa polypeptide, PetD), cytochrome f and the Rieske protein, while the 4 small subunits are PetG, PetL, PetM and PetN. The complex functions as a dimer.</text>
</comment>
<comment type="subcellular location">
    <subcellularLocation>
        <location evidence="1">Cellular thylakoid membrane</location>
        <topology evidence="1">Single-pass membrane protein</topology>
    </subcellularLocation>
</comment>
<comment type="similarity">
    <text evidence="1">Belongs to the PetM family.</text>
</comment>
<evidence type="ECO:0000255" key="1">
    <source>
        <dbReference type="HAMAP-Rule" id="MF_00396"/>
    </source>
</evidence>